<keyword id="KW-0025">Alternative splicing</keyword>
<keyword id="KW-0217">Developmental protein</keyword>
<keyword id="KW-0221">Differentiation</keyword>
<keyword id="KW-0238">DNA-binding</keyword>
<keyword id="KW-0287">Flowering</keyword>
<keyword id="KW-0539">Nucleus</keyword>
<keyword id="KW-1185">Reference proteome</keyword>
<keyword id="KW-0804">Transcription</keyword>
<keyword id="KW-0805">Transcription regulation</keyword>
<evidence type="ECO:0000255" key="1">
    <source>
        <dbReference type="PROSITE-ProRule" id="PRU00251"/>
    </source>
</evidence>
<evidence type="ECO:0000255" key="2">
    <source>
        <dbReference type="PROSITE-ProRule" id="PRU00629"/>
    </source>
</evidence>
<evidence type="ECO:0000269" key="3">
    <source>
    </source>
</evidence>
<evidence type="ECO:0000269" key="4">
    <source>
    </source>
</evidence>
<evidence type="ECO:0000269" key="5">
    <source>
    </source>
</evidence>
<evidence type="ECO:0000269" key="6">
    <source ref="10"/>
</evidence>
<evidence type="ECO:0000303" key="7">
    <source ref="4"/>
</evidence>
<evidence type="ECO:0000305" key="8"/>
<accession>Q0J466</accession>
<accession>B7EQ75</accession>
<accession>O04063</accession>
<accession>O24229</accession>
<accession>O24234</accession>
<accession>Q6Q9I1</accession>
<accession>Q6YZE7</accession>
<accession>Q7XB96</accession>
<accession>Q9SWQ5</accession>
<dbReference type="EMBL" id="U78891">
    <property type="protein sequence ID" value="AAC49816.2"/>
    <property type="status" value="ALT_INIT"/>
    <property type="molecule type" value="mRNA"/>
</dbReference>
<dbReference type="EMBL" id="U31994">
    <property type="protein sequence ID" value="AAB50180.1"/>
    <property type="molecule type" value="mRNA"/>
</dbReference>
<dbReference type="EMBL" id="Y15008">
    <property type="protein sequence ID" value="CAA75241.1"/>
    <property type="molecule type" value="mRNA"/>
</dbReference>
<dbReference type="EMBL" id="AY332477">
    <property type="protein sequence ID" value="AAQ01163.1"/>
    <property type="molecule type" value="mRNA"/>
</dbReference>
<dbReference type="EMBL" id="AY551921">
    <property type="protein sequence ID" value="AAS59827.1"/>
    <property type="molecule type" value="mRNA"/>
</dbReference>
<dbReference type="EMBL" id="AP005529">
    <property type="protein sequence ID" value="BAD11642.1"/>
    <property type="molecule type" value="Genomic_DNA"/>
</dbReference>
<dbReference type="EMBL" id="AP008214">
    <property type="protein sequence ID" value="BAF24249.1"/>
    <property type="molecule type" value="Genomic_DNA"/>
</dbReference>
<dbReference type="EMBL" id="AP014964">
    <property type="protein sequence ID" value="BAT06402.1"/>
    <property type="molecule type" value="Genomic_DNA"/>
</dbReference>
<dbReference type="EMBL" id="AK100263">
    <property type="protein sequence ID" value="BAG94522.1"/>
    <property type="molecule type" value="mRNA"/>
</dbReference>
<dbReference type="PIR" id="T04169">
    <property type="entry name" value="T04169"/>
</dbReference>
<dbReference type="PIR" id="T04307">
    <property type="entry name" value="T04307"/>
</dbReference>
<dbReference type="PIR" id="T04335">
    <property type="entry name" value="T04335"/>
</dbReference>
<dbReference type="RefSeq" id="XP_015648761.1">
    <property type="nucleotide sequence ID" value="XM_015793275.1"/>
</dbReference>
<dbReference type="RefSeq" id="XP_015648762.1">
    <property type="nucleotide sequence ID" value="XM_015793276.1"/>
</dbReference>
<dbReference type="SMR" id="Q0J466"/>
<dbReference type="FunCoup" id="Q0J466">
    <property type="interactions" value="47"/>
</dbReference>
<dbReference type="IntAct" id="Q0J466">
    <property type="interactions" value="13"/>
</dbReference>
<dbReference type="STRING" id="39947.Q0J466"/>
<dbReference type="PaxDb" id="39947-Q0J466"/>
<dbReference type="EnsemblPlants" id="Os08t0531700-01">
    <molecule id="Q0J466-1"/>
    <property type="protein sequence ID" value="Os08t0531700-01"/>
    <property type="gene ID" value="Os08g0531700"/>
</dbReference>
<dbReference type="Gramene" id="Os08t0531700-01">
    <molecule id="Q0J466-1"/>
    <property type="protein sequence ID" value="Os08t0531700-01"/>
    <property type="gene ID" value="Os08g0531700"/>
</dbReference>
<dbReference type="KEGG" id="dosa:Os08g0531700"/>
<dbReference type="eggNOG" id="KOG0014">
    <property type="taxonomic scope" value="Eukaryota"/>
</dbReference>
<dbReference type="HOGENOM" id="CLU_053053_0_2_1"/>
<dbReference type="InParanoid" id="Q0J466"/>
<dbReference type="OMA" id="PAWDNIG"/>
<dbReference type="OrthoDB" id="1898716at2759"/>
<dbReference type="Proteomes" id="UP000000763">
    <property type="component" value="Chromosome 8"/>
</dbReference>
<dbReference type="Proteomes" id="UP000059680">
    <property type="component" value="Chromosome 8"/>
</dbReference>
<dbReference type="GO" id="GO:0005634">
    <property type="term" value="C:nucleus"/>
    <property type="evidence" value="ECO:0007669"/>
    <property type="project" value="UniProtKB-SubCell"/>
</dbReference>
<dbReference type="GO" id="GO:0000981">
    <property type="term" value="F:DNA-binding transcription factor activity, RNA polymerase II-specific"/>
    <property type="evidence" value="ECO:0000318"/>
    <property type="project" value="GO_Central"/>
</dbReference>
<dbReference type="GO" id="GO:0046983">
    <property type="term" value="F:protein dimerization activity"/>
    <property type="evidence" value="ECO:0007669"/>
    <property type="project" value="InterPro"/>
</dbReference>
<dbReference type="GO" id="GO:0000978">
    <property type="term" value="F:RNA polymerase II cis-regulatory region sequence-specific DNA binding"/>
    <property type="evidence" value="ECO:0000318"/>
    <property type="project" value="GO_Central"/>
</dbReference>
<dbReference type="GO" id="GO:0030154">
    <property type="term" value="P:cell differentiation"/>
    <property type="evidence" value="ECO:0007669"/>
    <property type="project" value="UniProtKB-KW"/>
</dbReference>
<dbReference type="GO" id="GO:0009908">
    <property type="term" value="P:flower development"/>
    <property type="evidence" value="ECO:0007669"/>
    <property type="project" value="UniProtKB-KW"/>
</dbReference>
<dbReference type="GO" id="GO:0045944">
    <property type="term" value="P:positive regulation of transcription by RNA polymerase II"/>
    <property type="evidence" value="ECO:0007669"/>
    <property type="project" value="InterPro"/>
</dbReference>
<dbReference type="GO" id="GO:0006357">
    <property type="term" value="P:regulation of transcription by RNA polymerase II"/>
    <property type="evidence" value="ECO:0000318"/>
    <property type="project" value="GO_Central"/>
</dbReference>
<dbReference type="CDD" id="cd00265">
    <property type="entry name" value="MADS_MEF2_like"/>
    <property type="match status" value="1"/>
</dbReference>
<dbReference type="FunFam" id="3.40.1810.10:FF:000011">
    <property type="entry name" value="MADS-box transcription factor 7"/>
    <property type="match status" value="1"/>
</dbReference>
<dbReference type="Gene3D" id="3.40.1810.10">
    <property type="entry name" value="Transcription factor, MADS-box"/>
    <property type="match status" value="1"/>
</dbReference>
<dbReference type="InterPro" id="IPR050142">
    <property type="entry name" value="MADS-box/MEF2_TF"/>
</dbReference>
<dbReference type="InterPro" id="IPR033896">
    <property type="entry name" value="MEF2-like_N"/>
</dbReference>
<dbReference type="InterPro" id="IPR002487">
    <property type="entry name" value="TF_Kbox"/>
</dbReference>
<dbReference type="InterPro" id="IPR002100">
    <property type="entry name" value="TF_MADSbox"/>
</dbReference>
<dbReference type="InterPro" id="IPR036879">
    <property type="entry name" value="TF_MADSbox_sf"/>
</dbReference>
<dbReference type="PANTHER" id="PTHR48019">
    <property type="entry name" value="SERUM RESPONSE FACTOR HOMOLOG"/>
    <property type="match status" value="1"/>
</dbReference>
<dbReference type="Pfam" id="PF01486">
    <property type="entry name" value="K-box"/>
    <property type="match status" value="1"/>
</dbReference>
<dbReference type="Pfam" id="PF00319">
    <property type="entry name" value="SRF-TF"/>
    <property type="match status" value="1"/>
</dbReference>
<dbReference type="PRINTS" id="PR00404">
    <property type="entry name" value="MADSDOMAIN"/>
</dbReference>
<dbReference type="SMART" id="SM00432">
    <property type="entry name" value="MADS"/>
    <property type="match status" value="1"/>
</dbReference>
<dbReference type="SUPFAM" id="SSF55455">
    <property type="entry name" value="SRF-like"/>
    <property type="match status" value="1"/>
</dbReference>
<dbReference type="PROSITE" id="PS51297">
    <property type="entry name" value="K_BOX"/>
    <property type="match status" value="1"/>
</dbReference>
<dbReference type="PROSITE" id="PS00350">
    <property type="entry name" value="MADS_BOX_1"/>
    <property type="match status" value="1"/>
</dbReference>
<dbReference type="PROSITE" id="PS50066">
    <property type="entry name" value="MADS_BOX_2"/>
    <property type="match status" value="1"/>
</dbReference>
<sequence>MGRGRVELKRIENKINRQVTFAKRRNGLLKKAYELSVLCDAEVALIIFSNRGKLYEFCSTQSMTKTLEKYQKCSYAGPETAVQNRESEQLKASRNEYLKLKARVENLQRTQRNLLGEDLDSLGIKELESLEKQLDSSLKHVRTTRTKHLVDQLTELQRKEQMVSEANRCLRRKLEESNHVRGQQVWEQGCNLIGYERQPEVQQPLHGGNGFFHPLDAAGEPTLQIGYPAEHHEAMNSACMNTYMPPWLP</sequence>
<gene>
    <name type="primary">MADS7</name>
    <name type="synonym">AGL6</name>
    <name type="synonym">M79</name>
    <name type="synonym">MADS45</name>
    <name type="ordered locus">Os08g0531700</name>
    <name type="ordered locus">LOC_Os08g41950</name>
    <name type="ORF">P0702E04.10</name>
</gene>
<organism>
    <name type="scientific">Oryza sativa subsp. japonica</name>
    <name type="common">Rice</name>
    <dbReference type="NCBI Taxonomy" id="39947"/>
    <lineage>
        <taxon>Eukaryota</taxon>
        <taxon>Viridiplantae</taxon>
        <taxon>Streptophyta</taxon>
        <taxon>Embryophyta</taxon>
        <taxon>Tracheophyta</taxon>
        <taxon>Spermatophyta</taxon>
        <taxon>Magnoliopsida</taxon>
        <taxon>Liliopsida</taxon>
        <taxon>Poales</taxon>
        <taxon>Poaceae</taxon>
        <taxon>BOP clade</taxon>
        <taxon>Oryzoideae</taxon>
        <taxon>Oryzeae</taxon>
        <taxon>Oryzinae</taxon>
        <taxon>Oryza</taxon>
        <taxon>Oryza sativa</taxon>
    </lineage>
</organism>
<comment type="function">
    <text evidence="5 6">Probable transcription factor. May be involved in the control of flowering time.</text>
</comment>
<comment type="subunit">
    <text>May interact with the K-box of MADS6. May interact with MADS13 and MADS18.</text>
</comment>
<comment type="interaction">
    <interactant intactId="EBI-627872">
        <id>Q0J466</id>
    </interactant>
    <interactant intactId="EBI-627947">
        <id>Q2QW53</id>
        <label>MADS13</label>
    </interactant>
    <organismsDiffer>false</organismsDiffer>
    <experiments>3</experiments>
</comment>
<comment type="interaction">
    <interactant intactId="EBI-627872">
        <id>Q0J466</id>
    </interactant>
    <interactant intactId="EBI-627890">
        <id>Q10CQ1</id>
        <label>MADS14</label>
    </interactant>
    <organismsDiffer>false</organismsDiffer>
    <experiments>4</experiments>
</comment>
<comment type="interaction">
    <interactant intactId="EBI-627872">
        <id>Q0J466</id>
    </interactant>
    <interactant intactId="EBI-627980">
        <id>Q6EU39</id>
        <label>MADS6</label>
    </interactant>
    <organismsDiffer>false</organismsDiffer>
    <experiments>5</experiments>
</comment>
<comment type="subcellular location">
    <subcellularLocation>
        <location evidence="8">Nucleus</location>
    </subcellularLocation>
</comment>
<comment type="alternative products">
    <event type="alternative splicing"/>
    <isoform>
        <id>Q0J466-1</id>
        <id>Q6Q9I1-1</id>
        <name>1</name>
        <sequence type="displayed"/>
    </isoform>
    <isoform>
        <id>Q0J466-2</id>
        <id>Q6Q9I1-2</id>
        <name>2</name>
        <sequence type="described" ref="VSP_017780 VSP_017781"/>
    </isoform>
</comment>
<comment type="tissue specificity">
    <text evidence="3 4 5">Expressed in lodicules, stamens and carpels.</text>
</comment>
<comment type="developmental stage">
    <text evidence="3 4">Expressed at early stage of flower development in the spikelet (rice flower) primordia and later in stamen and pistil primordia. Expressed during ovule development in the inner and outer integuments.</text>
</comment>
<comment type="sequence caution" evidence="8">
    <conflict type="erroneous initiation">
        <sequence resource="EMBL-CDS" id="AAC49816"/>
    </conflict>
</comment>
<proteinExistence type="evidence at protein level"/>
<reference key="1">
    <citation type="journal article" date="1997" name="Mol. Cells">
        <title>Characterization of two rice MADS box genes that control flowering time.</title>
        <authorList>
            <person name="Kang H.-G."/>
            <person name="Jang S."/>
            <person name="Chung J.E."/>
            <person name="Cho Y.-G."/>
            <person name="An G."/>
        </authorList>
    </citation>
    <scope>NUCLEOTIDE SEQUENCE [MRNA] (ISOFORM 1)</scope>
    <scope>FUNCTION</scope>
    <scope>TISSUE SPECIFICITY</scope>
    <source>
        <strain>cv. M201</strain>
    </source>
</reference>
<reference key="2">
    <citation type="journal article" date="1997" name="Mol. Gen. Genet.">
        <title>MADS box genes expressed in developing inflorescences of rice and sorghum.</title>
        <authorList>
            <person name="Greco R."/>
            <person name="Stagi L."/>
            <person name="Colombo L."/>
            <person name="Angenent G.C."/>
            <person name="Sari-Gorla M."/>
            <person name="Pe M.E."/>
        </authorList>
    </citation>
    <scope>NUCLEOTIDE SEQUENCE [MRNA] (ISOFORM 1)</scope>
    <scope>TISSUE SPECIFICITY</scope>
    <scope>DEVELOPMENTAL STAGE</scope>
</reference>
<reference key="3">
    <citation type="submission" date="1997-09" db="EMBL/GenBank/DDBJ databases">
        <title>Characterization and regulation of a rice MADS-box gene.</title>
        <authorList>
            <person name="Qu L.J."/>
            <person name="Zhang Y."/>
            <person name="Liu M."/>
            <person name="Gu H."/>
            <person name="Chen Z."/>
        </authorList>
    </citation>
    <scope>NUCLEOTIDE SEQUENCE [MRNA] (ISOFORM 1)</scope>
    <source>
        <strain>cv. Zhonghua 8</strain>
        <tissue>Flower</tissue>
    </source>
</reference>
<reference key="4">
    <citation type="submission" date="2004-02" db="EMBL/GenBank/DDBJ databases">
        <title>Isolation and characterization of rice MADS box gene homologs.</title>
        <authorList>
            <person name="Yao Q."/>
            <person name="Peng R."/>
            <person name="Xiong A."/>
        </authorList>
    </citation>
    <scope>NUCLEOTIDE SEQUENCE [MRNA] (ISOFORMS 1 AND 2)</scope>
</reference>
<reference key="5">
    <citation type="journal article" date="2005" name="Nature">
        <title>The map-based sequence of the rice genome.</title>
        <authorList>
            <consortium name="International rice genome sequencing project (IRGSP)"/>
        </authorList>
    </citation>
    <scope>NUCLEOTIDE SEQUENCE [LARGE SCALE GENOMIC DNA]</scope>
    <source>
        <strain>cv. Nipponbare</strain>
    </source>
</reference>
<reference key="6">
    <citation type="journal article" date="2008" name="Nucleic Acids Res.">
        <title>The rice annotation project database (RAP-DB): 2008 update.</title>
        <authorList>
            <consortium name="The rice annotation project (RAP)"/>
        </authorList>
    </citation>
    <scope>GENOME REANNOTATION</scope>
    <source>
        <strain>cv. Nipponbare</strain>
    </source>
</reference>
<reference key="7">
    <citation type="journal article" date="2013" name="Rice">
        <title>Improvement of the Oryza sativa Nipponbare reference genome using next generation sequence and optical map data.</title>
        <authorList>
            <person name="Kawahara Y."/>
            <person name="de la Bastide M."/>
            <person name="Hamilton J.P."/>
            <person name="Kanamori H."/>
            <person name="McCombie W.R."/>
            <person name="Ouyang S."/>
            <person name="Schwartz D.C."/>
            <person name="Tanaka T."/>
            <person name="Wu J."/>
            <person name="Zhou S."/>
            <person name="Childs K.L."/>
            <person name="Davidson R.M."/>
            <person name="Lin H."/>
            <person name="Quesada-Ocampo L."/>
            <person name="Vaillancourt B."/>
            <person name="Sakai H."/>
            <person name="Lee S.S."/>
            <person name="Kim J."/>
            <person name="Numa H."/>
            <person name="Itoh T."/>
            <person name="Buell C.R."/>
            <person name="Matsumoto T."/>
        </authorList>
    </citation>
    <scope>GENOME REANNOTATION</scope>
    <source>
        <strain>cv. Nipponbare</strain>
    </source>
</reference>
<reference key="8">
    <citation type="journal article" date="2003" name="Science">
        <title>Collection, mapping, and annotation of over 28,000 cDNA clones from japonica rice.</title>
        <authorList>
            <consortium name="The rice full-length cDNA consortium"/>
        </authorList>
    </citation>
    <scope>NUCLEOTIDE SEQUENCE [LARGE SCALE MRNA]</scope>
    <source>
        <strain>cv. Nipponbare</strain>
    </source>
</reference>
<reference key="9">
    <citation type="journal article" date="1999" name="Plant Physiol.">
        <title>Determination of the motif responsible for interaction between the rice APETALA1/AGAMOUS-LIKE9 family proteins using a yeast two-hybrid system.</title>
        <authorList>
            <person name="Moon Y.-H."/>
            <person name="Kang H.-G."/>
            <person name="Jung J.-Y."/>
            <person name="Jeon J.-S."/>
            <person name="Sung S.-K."/>
            <person name="An G."/>
        </authorList>
    </citation>
    <scope>INTERACTION WITH MADS6</scope>
</reference>
<reference key="10">
    <citation type="journal article" date="2000" name="Mol. Breed.">
        <title>Production of transgenic rice plants showing reduced heading date and plant height by ectopic expression of rice MADS-box genes.</title>
        <authorList>
            <person name="Jeon J.-S."/>
            <person name="Lee S."/>
            <person name="Nam J."/>
            <person name="Jung K.-H."/>
            <person name="Yang W.-S."/>
            <person name="Yi G.-H."/>
            <person name="Oh B.-G."/>
            <person name="An G."/>
        </authorList>
        <dbReference type="AGRICOLA" id="IND22436162"/>
    </citation>
    <scope>FUNCTION</scope>
</reference>
<reference key="11">
    <citation type="journal article" date="2002" name="Mol. Genet. Genomics">
        <title>Ovule-specific MADS-box proteins have conserved protein-protein interactions in monocot and dicot plants.</title>
        <authorList>
            <person name="Favaro R."/>
            <person name="Immink R.G."/>
            <person name="Ferioli V."/>
            <person name="Bernasconi B."/>
            <person name="Byzova M."/>
            <person name="Angenent G.C."/>
            <person name="Kater M.M."/>
            <person name="Colombo L."/>
        </authorList>
    </citation>
    <scope>INTERACTION WITH MADS13</scope>
    <scope>TISSUE SPECIFICITY</scope>
    <scope>DEVELOPMENTAL STAGE</scope>
</reference>
<reference key="12">
    <citation type="journal article" date="2004" name="Plant Physiol.">
        <title>Functional characterization of OsMADS18, a member of the AP1/SQUA subfamily of MADS box genes.</title>
        <authorList>
            <person name="Fornara F."/>
            <person name="Parenicova L."/>
            <person name="Falasca G."/>
            <person name="Pelucchi N."/>
            <person name="Masiero S."/>
            <person name="Ciannamea S."/>
            <person name="Lopez-Dee Z.P."/>
            <person name="Altamura M.M."/>
            <person name="Colombo L."/>
            <person name="Kater M.M."/>
        </authorList>
    </citation>
    <scope>INTERACTION WITH MADS18</scope>
</reference>
<protein>
    <recommendedName>
        <fullName>MADS-box transcription factor 7</fullName>
    </recommendedName>
    <alternativeName>
        <fullName>FDRMADS1</fullName>
    </alternativeName>
    <alternativeName>
        <fullName>MADS-box protein 45</fullName>
    </alternativeName>
    <alternativeName>
        <fullName>OsMADS45</fullName>
    </alternativeName>
    <alternativeName>
        <fullName>OsMADS7</fullName>
    </alternativeName>
    <alternativeName>
        <fullName>Protein AGAMOUS-like 6</fullName>
    </alternativeName>
    <alternativeName>
        <fullName>RMADS216</fullName>
    </alternativeName>
</protein>
<feature type="chain" id="PRO_0000229896" description="MADS-box transcription factor 7">
    <location>
        <begin position="1"/>
        <end position="249"/>
    </location>
</feature>
<feature type="domain" description="MADS-box" evidence="1">
    <location>
        <begin position="1"/>
        <end position="61"/>
    </location>
</feature>
<feature type="domain" description="K-box" evidence="2">
    <location>
        <begin position="90"/>
        <end position="180"/>
    </location>
</feature>
<feature type="splice variant" id="VSP_017780" description="In isoform 2." evidence="7">
    <original>M</original>
    <variation>MAEKKKKKKKKKPQSLLVLTSWRSIGM</variation>
    <location>
        <position position="1"/>
    </location>
</feature>
<feature type="splice variant" id="VSP_017781" description="In isoform 2." evidence="7">
    <original>Q</original>
    <variation>QRQYYKSKHRLCLVRSKVWNLVKIRDDVTEKLCMYE</variation>
    <location>
        <position position="111"/>
    </location>
</feature>
<feature type="sequence conflict" description="In Ref. 3; CAA75241." evidence="8" ref="3">
    <original>R</original>
    <variation>K</variation>
    <location>
        <position position="5"/>
    </location>
</feature>
<feature type="sequence conflict" description="In Ref. 4; AAQ01163." evidence="8" ref="4">
    <original>Q</original>
    <variation>R</variation>
    <location>
        <position position="18"/>
    </location>
</feature>
<feature type="sequence conflict" description="In Ref. 4; AAQ01163." evidence="8" ref="4">
    <original>S</original>
    <variation>G</variation>
    <location>
        <position position="93"/>
    </location>
</feature>
<feature type="sequence conflict" description="In Ref. 3; CAA75241." evidence="8" ref="3">
    <original>S</original>
    <variation>Y</variation>
    <location>
        <position position="137"/>
    </location>
</feature>
<feature type="sequence conflict" description="In Ref. 4; AAQ01163." evidence="8" ref="4">
    <original>V</original>
    <variation>G</variation>
    <location>
        <position position="163"/>
    </location>
</feature>
<name>MADS7_ORYSJ</name>